<proteinExistence type="evidence at transcript level"/>
<organism>
    <name type="scientific">Aedes aegypti</name>
    <name type="common">Yellowfever mosquito</name>
    <name type="synonym">Culex aegypti</name>
    <dbReference type="NCBI Taxonomy" id="7159"/>
    <lineage>
        <taxon>Eukaryota</taxon>
        <taxon>Metazoa</taxon>
        <taxon>Ecdysozoa</taxon>
        <taxon>Arthropoda</taxon>
        <taxon>Hexapoda</taxon>
        <taxon>Insecta</taxon>
        <taxon>Pterygota</taxon>
        <taxon>Neoptera</taxon>
        <taxon>Endopterygota</taxon>
        <taxon>Diptera</taxon>
        <taxon>Nematocera</taxon>
        <taxon>Culicoidea</taxon>
        <taxon>Culicidae</taxon>
        <taxon>Culicinae</taxon>
        <taxon>Aedini</taxon>
        <taxon>Aedes</taxon>
        <taxon>Stegomyia</taxon>
    </lineage>
</organism>
<dbReference type="EMBL" id="DQ440308">
    <property type="protein sequence ID" value="ABF18341.1"/>
    <property type="molecule type" value="mRNA"/>
</dbReference>
<dbReference type="EMBL" id="CH477239">
    <property type="protein sequence ID" value="EAT46483.1"/>
    <property type="molecule type" value="Genomic_DNA"/>
</dbReference>
<dbReference type="SMR" id="Q1HQY6"/>
<dbReference type="FunCoup" id="Q1HQY6">
    <property type="interactions" value="2418"/>
</dbReference>
<dbReference type="STRING" id="7159.Q1HQY6"/>
<dbReference type="PaxDb" id="7159-AAEL002334-PA"/>
<dbReference type="EnsemblMetazoa" id="AAEL002334-RA">
    <property type="protein sequence ID" value="AAEL002334-PA"/>
    <property type="gene ID" value="AAEL002334"/>
</dbReference>
<dbReference type="GeneID" id="5574338"/>
<dbReference type="KEGG" id="aag:5574338"/>
<dbReference type="CTD" id="3646"/>
<dbReference type="VEuPathDB" id="VectorBase:AAEL002334"/>
<dbReference type="eggNOG" id="KOG2758">
    <property type="taxonomic scope" value="Eukaryota"/>
</dbReference>
<dbReference type="HOGENOM" id="CLU_031132_0_1_1"/>
<dbReference type="InParanoid" id="Q1HQY6"/>
<dbReference type="OMA" id="NCPWILR"/>
<dbReference type="OrthoDB" id="417252at2759"/>
<dbReference type="PhylomeDB" id="Q1HQY6"/>
<dbReference type="Proteomes" id="UP000008820">
    <property type="component" value="Chromosome 2"/>
</dbReference>
<dbReference type="Proteomes" id="UP000682892">
    <property type="component" value="Unassembled WGS sequence"/>
</dbReference>
<dbReference type="GO" id="GO:0016282">
    <property type="term" value="C:eukaryotic 43S preinitiation complex"/>
    <property type="evidence" value="ECO:0007669"/>
    <property type="project" value="UniProtKB-UniRule"/>
</dbReference>
<dbReference type="GO" id="GO:0033290">
    <property type="term" value="C:eukaryotic 48S preinitiation complex"/>
    <property type="evidence" value="ECO:0007669"/>
    <property type="project" value="UniProtKB-UniRule"/>
</dbReference>
<dbReference type="GO" id="GO:0071540">
    <property type="term" value="C:eukaryotic translation initiation factor 3 complex, eIF3e"/>
    <property type="evidence" value="ECO:0007669"/>
    <property type="project" value="UniProtKB-UniRule"/>
</dbReference>
<dbReference type="GO" id="GO:0003743">
    <property type="term" value="F:translation initiation factor activity"/>
    <property type="evidence" value="ECO:0007669"/>
    <property type="project" value="UniProtKB-UniRule"/>
</dbReference>
<dbReference type="GO" id="GO:0001732">
    <property type="term" value="P:formation of cytoplasmic translation initiation complex"/>
    <property type="evidence" value="ECO:0007669"/>
    <property type="project" value="UniProtKB-UniRule"/>
</dbReference>
<dbReference type="CDD" id="cd21378">
    <property type="entry name" value="eIF3E"/>
    <property type="match status" value="1"/>
</dbReference>
<dbReference type="HAMAP" id="MF_03004">
    <property type="entry name" value="eIF3e"/>
    <property type="match status" value="1"/>
</dbReference>
<dbReference type="InterPro" id="IPR016650">
    <property type="entry name" value="eIF3e"/>
</dbReference>
<dbReference type="InterPro" id="IPR019010">
    <property type="entry name" value="eIF3e_N"/>
</dbReference>
<dbReference type="InterPro" id="IPR000717">
    <property type="entry name" value="PCI_dom"/>
</dbReference>
<dbReference type="InterPro" id="IPR036390">
    <property type="entry name" value="WH_DNA-bd_sf"/>
</dbReference>
<dbReference type="PANTHER" id="PTHR10317">
    <property type="entry name" value="EUKARYOTIC TRANSLATION INITIATION FACTOR 3 SUBUNIT E"/>
    <property type="match status" value="1"/>
</dbReference>
<dbReference type="Pfam" id="PF09440">
    <property type="entry name" value="eIF3_N"/>
    <property type="match status" value="1"/>
</dbReference>
<dbReference type="Pfam" id="PF01399">
    <property type="entry name" value="PCI"/>
    <property type="match status" value="1"/>
</dbReference>
<dbReference type="PIRSF" id="PIRSF016255">
    <property type="entry name" value="eIF3e_su6"/>
    <property type="match status" value="1"/>
</dbReference>
<dbReference type="SMART" id="SM01186">
    <property type="entry name" value="eIF3_N"/>
    <property type="match status" value="1"/>
</dbReference>
<dbReference type="SMART" id="SM00088">
    <property type="entry name" value="PINT"/>
    <property type="match status" value="1"/>
</dbReference>
<dbReference type="SUPFAM" id="SSF46785">
    <property type="entry name" value="Winged helix' DNA-binding domain"/>
    <property type="match status" value="1"/>
</dbReference>
<dbReference type="PROSITE" id="PS50250">
    <property type="entry name" value="PCI"/>
    <property type="match status" value="1"/>
</dbReference>
<comment type="function">
    <text evidence="1">Component of the eukaryotic translation initiation factor 3 (eIF-3) complex, which is involved in protein synthesis of a specialized repertoire of mRNAs and, together with other initiation factors, stimulates binding of mRNA and methionyl-tRNAi to the 40S ribosome. The eIF-3 complex specifically targets and initiates translation of a subset of mRNAs involved in cell proliferation.</text>
</comment>
<comment type="subunit">
    <text evidence="1">Component of the eukaryotic translation initiation factor 3 (eIF-3) complex.</text>
</comment>
<comment type="subcellular location">
    <subcellularLocation>
        <location evidence="1">Cytoplasm</location>
    </subcellularLocation>
</comment>
<comment type="similarity">
    <text evidence="1">Belongs to the eIF-3 subunit E family.</text>
</comment>
<reference key="1">
    <citation type="journal article" date="2007" name="BMC Genomics">
        <title>An annotated catalogue of salivary gland transcripts in the adult female mosquito, Aedes aegypti.</title>
        <authorList>
            <person name="Ribeiro J.M.C."/>
            <person name="Arca B."/>
            <person name="Lombardo F."/>
            <person name="Calvo E."/>
            <person name="Phan V.M."/>
            <person name="Chandra P.K."/>
            <person name="Wikel S.K."/>
        </authorList>
    </citation>
    <scope>NUCLEOTIDE SEQUENCE [LARGE SCALE MRNA]</scope>
    <source>
        <strain>Black-eyed Liverpool</strain>
        <tissue>Salivary gland</tissue>
    </source>
</reference>
<reference key="2">
    <citation type="journal article" date="2007" name="Science">
        <title>Genome sequence of Aedes aegypti, a major arbovirus vector.</title>
        <authorList>
            <person name="Nene V."/>
            <person name="Wortman J.R."/>
            <person name="Lawson D."/>
            <person name="Haas B.J."/>
            <person name="Kodira C.D."/>
            <person name="Tu Z.J."/>
            <person name="Loftus B.J."/>
            <person name="Xi Z."/>
            <person name="Megy K."/>
            <person name="Grabherr M."/>
            <person name="Ren Q."/>
            <person name="Zdobnov E.M."/>
            <person name="Lobo N.F."/>
            <person name="Campbell K.S."/>
            <person name="Brown S.E."/>
            <person name="Bonaldo M.F."/>
            <person name="Zhu J."/>
            <person name="Sinkins S.P."/>
            <person name="Hogenkamp D.G."/>
            <person name="Amedeo P."/>
            <person name="Arensburger P."/>
            <person name="Atkinson P.W."/>
            <person name="Bidwell S.L."/>
            <person name="Biedler J."/>
            <person name="Birney E."/>
            <person name="Bruggner R.V."/>
            <person name="Costas J."/>
            <person name="Coy M.R."/>
            <person name="Crabtree J."/>
            <person name="Crawford M."/>
            <person name="DeBruyn B."/>
            <person name="DeCaprio D."/>
            <person name="Eiglmeier K."/>
            <person name="Eisenstadt E."/>
            <person name="El-Dorry H."/>
            <person name="Gelbart W.M."/>
            <person name="Gomes S.L."/>
            <person name="Hammond M."/>
            <person name="Hannick L.I."/>
            <person name="Hogan J.R."/>
            <person name="Holmes M.H."/>
            <person name="Jaffe D."/>
            <person name="Johnston S.J."/>
            <person name="Kennedy R.C."/>
            <person name="Koo H."/>
            <person name="Kravitz S."/>
            <person name="Kriventseva E.V."/>
            <person name="Kulp D."/>
            <person name="Labutti K."/>
            <person name="Lee E."/>
            <person name="Li S."/>
            <person name="Lovin D.D."/>
            <person name="Mao C."/>
            <person name="Mauceli E."/>
            <person name="Menck C.F."/>
            <person name="Miller J.R."/>
            <person name="Montgomery P."/>
            <person name="Mori A."/>
            <person name="Nascimento A.L."/>
            <person name="Naveira H.F."/>
            <person name="Nusbaum C."/>
            <person name="O'Leary S.B."/>
            <person name="Orvis J."/>
            <person name="Pertea M."/>
            <person name="Quesneville H."/>
            <person name="Reidenbach K.R."/>
            <person name="Rogers Y.-H.C."/>
            <person name="Roth C.W."/>
            <person name="Schneider J.R."/>
            <person name="Schatz M."/>
            <person name="Shumway M."/>
            <person name="Stanke M."/>
            <person name="Stinson E.O."/>
            <person name="Tubio J.M.C."/>
            <person name="Vanzee J.P."/>
            <person name="Verjovski-Almeida S."/>
            <person name="Werner D."/>
            <person name="White O.R."/>
            <person name="Wyder S."/>
            <person name="Zeng Q."/>
            <person name="Zhao Q."/>
            <person name="Zhao Y."/>
            <person name="Hill C.A."/>
            <person name="Raikhel A.S."/>
            <person name="Soares M.B."/>
            <person name="Knudson D.L."/>
            <person name="Lee N.H."/>
            <person name="Galagan J."/>
            <person name="Salzberg S.L."/>
            <person name="Paulsen I.T."/>
            <person name="Dimopoulos G."/>
            <person name="Collins F.H."/>
            <person name="Bruce B."/>
            <person name="Fraser-Liggett C.M."/>
            <person name="Severson D.W."/>
        </authorList>
    </citation>
    <scope>NUCLEOTIDE SEQUENCE [LARGE SCALE GENOMIC DNA]</scope>
    <source>
        <strain>LVPib12</strain>
    </source>
</reference>
<accession>Q1HQY6</accession>
<name>EIF3E_AEDAE</name>
<sequence length="435" mass="51031">MAKFDLTAKNCQYLDRHLTFPLLEFLLQKDIYDQTSLLKFILQTVSKTNMVDYTMDIRERLNMGDELPEELSKRRANVLVKLKELQTEVAPLMKCMEELKNPDSMKDSKSIVHALQQEFDFKHDIIKSAQKLAKYLYECGNYRDSISYLYICLLVMEPADKNYLTVLWGKLAAEILVLNWPTALEDLTRLRDFIDNHNFSPIEVLQQRTWLIHWSVLVFFNHAKGRDLIIEMFLYKPLYLNAIQTMCPHILRYLATAVIINRGRRNALKDLIKIIQQESYTYRDPITEFLEHLYVNFDFEGARMKLHECQTVIVNDFFIIGCLQEFIENARLMIFETFCRIHQCITIGMLADKLNMEPDEAECWIVNLIRNARLDAKIDSKLGHVVMGTQPLSPYQQLVEKIDSLSVRSEALTVLVERKQKAKTQESGEGNWKYY</sequence>
<protein>
    <recommendedName>
        <fullName evidence="1">Eukaryotic translation initiation factor 3 subunit E</fullName>
        <shortName evidence="1">eIF3e</shortName>
    </recommendedName>
    <alternativeName>
        <fullName evidence="1">Eukaryotic translation initiation factor 3 subunit 6</fullName>
    </alternativeName>
</protein>
<keyword id="KW-0963">Cytoplasm</keyword>
<keyword id="KW-0396">Initiation factor</keyword>
<keyword id="KW-0648">Protein biosynthesis</keyword>
<keyword id="KW-1185">Reference proteome</keyword>
<gene>
    <name type="primary">eIF3-S6</name>
    <name type="ORF">AAEL002334</name>
</gene>
<evidence type="ECO:0000255" key="1">
    <source>
        <dbReference type="HAMAP-Rule" id="MF_03004"/>
    </source>
</evidence>
<evidence type="ECO:0000255" key="2">
    <source>
        <dbReference type="PROSITE-ProRule" id="PRU01185"/>
    </source>
</evidence>
<feature type="chain" id="PRO_0000365959" description="Eukaryotic translation initiation factor 3 subunit E">
    <location>
        <begin position="1"/>
        <end position="435"/>
    </location>
</feature>
<feature type="domain" description="PCI" evidence="2">
    <location>
        <begin position="219"/>
        <end position="392"/>
    </location>
</feature>